<evidence type="ECO:0000255" key="1">
    <source>
        <dbReference type="HAMAP-Rule" id="MF_02006"/>
    </source>
</evidence>
<feature type="chain" id="PRO_1000189307" description="Tyrosine--tRNA ligase">
    <location>
        <begin position="1"/>
        <end position="419"/>
    </location>
</feature>
<feature type="domain" description="S4 RNA-binding" evidence="1">
    <location>
        <begin position="352"/>
        <end position="418"/>
    </location>
</feature>
<feature type="short sequence motif" description="'HIGH' region">
    <location>
        <begin position="39"/>
        <end position="48"/>
    </location>
</feature>
<feature type="short sequence motif" description="'KMSKS' region">
    <location>
        <begin position="230"/>
        <end position="234"/>
    </location>
</feature>
<feature type="binding site" evidence="1">
    <location>
        <position position="34"/>
    </location>
    <ligand>
        <name>L-tyrosine</name>
        <dbReference type="ChEBI" id="CHEBI:58315"/>
    </ligand>
</feature>
<feature type="binding site" evidence="1">
    <location>
        <position position="168"/>
    </location>
    <ligand>
        <name>L-tyrosine</name>
        <dbReference type="ChEBI" id="CHEBI:58315"/>
    </ligand>
</feature>
<feature type="binding site" evidence="1">
    <location>
        <position position="172"/>
    </location>
    <ligand>
        <name>L-tyrosine</name>
        <dbReference type="ChEBI" id="CHEBI:58315"/>
    </ligand>
</feature>
<feature type="binding site" evidence="1">
    <location>
        <position position="233"/>
    </location>
    <ligand>
        <name>ATP</name>
        <dbReference type="ChEBI" id="CHEBI:30616"/>
    </ligand>
</feature>
<name>SYY_LISMH</name>
<gene>
    <name evidence="1" type="primary">tyrS</name>
    <name type="ordered locus">LMHCC_0965</name>
</gene>
<keyword id="KW-0030">Aminoacyl-tRNA synthetase</keyword>
<keyword id="KW-0067">ATP-binding</keyword>
<keyword id="KW-0963">Cytoplasm</keyword>
<keyword id="KW-0436">Ligase</keyword>
<keyword id="KW-0547">Nucleotide-binding</keyword>
<keyword id="KW-0648">Protein biosynthesis</keyword>
<keyword id="KW-0694">RNA-binding</keyword>
<accession>B8DHE4</accession>
<proteinExistence type="inferred from homology"/>
<comment type="function">
    <text evidence="1">Catalyzes the attachment of tyrosine to tRNA(Tyr) in a two-step reaction: tyrosine is first activated by ATP to form Tyr-AMP and then transferred to the acceptor end of tRNA(Tyr).</text>
</comment>
<comment type="catalytic activity">
    <reaction evidence="1">
        <text>tRNA(Tyr) + L-tyrosine + ATP = L-tyrosyl-tRNA(Tyr) + AMP + diphosphate + H(+)</text>
        <dbReference type="Rhea" id="RHEA:10220"/>
        <dbReference type="Rhea" id="RHEA-COMP:9706"/>
        <dbReference type="Rhea" id="RHEA-COMP:9707"/>
        <dbReference type="ChEBI" id="CHEBI:15378"/>
        <dbReference type="ChEBI" id="CHEBI:30616"/>
        <dbReference type="ChEBI" id="CHEBI:33019"/>
        <dbReference type="ChEBI" id="CHEBI:58315"/>
        <dbReference type="ChEBI" id="CHEBI:78442"/>
        <dbReference type="ChEBI" id="CHEBI:78536"/>
        <dbReference type="ChEBI" id="CHEBI:456215"/>
        <dbReference type="EC" id="6.1.1.1"/>
    </reaction>
</comment>
<comment type="subunit">
    <text evidence="1">Homodimer.</text>
</comment>
<comment type="subcellular location">
    <subcellularLocation>
        <location evidence="1">Cytoplasm</location>
    </subcellularLocation>
</comment>
<comment type="similarity">
    <text evidence="1">Belongs to the class-I aminoacyl-tRNA synthetase family. TyrS type 1 subfamily.</text>
</comment>
<sequence>MNIIDELEWRGAIYQQTDEEGLRKWVDEKQISLYCGIDPSGDSMHIGHLIPFMILRRFQNAGHRPIILVGGATGTIGDPSGKKEERKLQSMEQISKNVESLRVQLGKIFDFEGDSAASMVNNYDWTKDVSILDFLRDYGKEFNVNTMLSKDIVASRLEVGISFTEFAYQILQAMDFNHLYEFNDCRLQIGGSDQWGNITAGLDLIRKKQGENAKAFGLTIPLLTKADGTKFGKSEGGAIWLNPEKTTPYEFYQFWINTDDRDVVKYLKYFTFLTEAEIDELAKQVETEPHLRAAQKTLAAEMTKFVHSEEALEQALKISKALFSGDVKALTADEIEQGFKDVPTFVAEDSEANLVDWLVTLGIEPSKRQAREDVGNGAIYINGERQQDLEKIMDASDRIENKFTIVRRGKKKYFLVSYK</sequence>
<protein>
    <recommendedName>
        <fullName evidence="1">Tyrosine--tRNA ligase</fullName>
        <ecNumber evidence="1">6.1.1.1</ecNumber>
    </recommendedName>
    <alternativeName>
        <fullName evidence="1">Tyrosyl-tRNA synthetase</fullName>
        <shortName evidence="1">TyrRS</shortName>
    </alternativeName>
</protein>
<dbReference type="EC" id="6.1.1.1" evidence="1"/>
<dbReference type="EMBL" id="CP001175">
    <property type="protein sequence ID" value="ACK39313.1"/>
    <property type="molecule type" value="Genomic_DNA"/>
</dbReference>
<dbReference type="RefSeq" id="WP_003729637.1">
    <property type="nucleotide sequence ID" value="NC_011660.1"/>
</dbReference>
<dbReference type="SMR" id="B8DHE4"/>
<dbReference type="KEGG" id="lmh:LMHCC_0965"/>
<dbReference type="HOGENOM" id="CLU_024003_0_3_9"/>
<dbReference type="GO" id="GO:0005829">
    <property type="term" value="C:cytosol"/>
    <property type="evidence" value="ECO:0007669"/>
    <property type="project" value="TreeGrafter"/>
</dbReference>
<dbReference type="GO" id="GO:0005524">
    <property type="term" value="F:ATP binding"/>
    <property type="evidence" value="ECO:0007669"/>
    <property type="project" value="UniProtKB-UniRule"/>
</dbReference>
<dbReference type="GO" id="GO:0003723">
    <property type="term" value="F:RNA binding"/>
    <property type="evidence" value="ECO:0007669"/>
    <property type="project" value="UniProtKB-KW"/>
</dbReference>
<dbReference type="GO" id="GO:0004831">
    <property type="term" value="F:tyrosine-tRNA ligase activity"/>
    <property type="evidence" value="ECO:0007669"/>
    <property type="project" value="UniProtKB-UniRule"/>
</dbReference>
<dbReference type="GO" id="GO:0006437">
    <property type="term" value="P:tyrosyl-tRNA aminoacylation"/>
    <property type="evidence" value="ECO:0007669"/>
    <property type="project" value="UniProtKB-UniRule"/>
</dbReference>
<dbReference type="CDD" id="cd00165">
    <property type="entry name" value="S4"/>
    <property type="match status" value="1"/>
</dbReference>
<dbReference type="CDD" id="cd00805">
    <property type="entry name" value="TyrRS_core"/>
    <property type="match status" value="1"/>
</dbReference>
<dbReference type="FunFam" id="1.10.240.10:FF:000001">
    <property type="entry name" value="Tyrosine--tRNA ligase"/>
    <property type="match status" value="1"/>
</dbReference>
<dbReference type="FunFam" id="3.10.290.10:FF:000012">
    <property type="entry name" value="Tyrosine--tRNA ligase"/>
    <property type="match status" value="1"/>
</dbReference>
<dbReference type="FunFam" id="3.40.50.620:FF:000008">
    <property type="entry name" value="Tyrosine--tRNA ligase"/>
    <property type="match status" value="1"/>
</dbReference>
<dbReference type="Gene3D" id="3.40.50.620">
    <property type="entry name" value="HUPs"/>
    <property type="match status" value="1"/>
</dbReference>
<dbReference type="Gene3D" id="3.10.290.10">
    <property type="entry name" value="RNA-binding S4 domain"/>
    <property type="match status" value="1"/>
</dbReference>
<dbReference type="Gene3D" id="1.10.240.10">
    <property type="entry name" value="Tyrosyl-Transfer RNA Synthetase"/>
    <property type="match status" value="1"/>
</dbReference>
<dbReference type="HAMAP" id="MF_02006">
    <property type="entry name" value="Tyr_tRNA_synth_type1"/>
    <property type="match status" value="1"/>
</dbReference>
<dbReference type="InterPro" id="IPR001412">
    <property type="entry name" value="aa-tRNA-synth_I_CS"/>
</dbReference>
<dbReference type="InterPro" id="IPR002305">
    <property type="entry name" value="aa-tRNA-synth_Ic"/>
</dbReference>
<dbReference type="InterPro" id="IPR014729">
    <property type="entry name" value="Rossmann-like_a/b/a_fold"/>
</dbReference>
<dbReference type="InterPro" id="IPR002942">
    <property type="entry name" value="S4_RNA-bd"/>
</dbReference>
<dbReference type="InterPro" id="IPR036986">
    <property type="entry name" value="S4_RNA-bd_sf"/>
</dbReference>
<dbReference type="InterPro" id="IPR054608">
    <property type="entry name" value="SYY-like_C"/>
</dbReference>
<dbReference type="InterPro" id="IPR002307">
    <property type="entry name" value="Tyr-tRNA-ligase"/>
</dbReference>
<dbReference type="InterPro" id="IPR024088">
    <property type="entry name" value="Tyr-tRNA-ligase_bac-type"/>
</dbReference>
<dbReference type="InterPro" id="IPR024107">
    <property type="entry name" value="Tyr-tRNA-ligase_bac_1"/>
</dbReference>
<dbReference type="NCBIfam" id="TIGR00234">
    <property type="entry name" value="tyrS"/>
    <property type="match status" value="1"/>
</dbReference>
<dbReference type="PANTHER" id="PTHR11766:SF0">
    <property type="entry name" value="TYROSINE--TRNA LIGASE, MITOCHONDRIAL"/>
    <property type="match status" value="1"/>
</dbReference>
<dbReference type="PANTHER" id="PTHR11766">
    <property type="entry name" value="TYROSYL-TRNA SYNTHETASE"/>
    <property type="match status" value="1"/>
</dbReference>
<dbReference type="Pfam" id="PF22421">
    <property type="entry name" value="SYY_C-terminal"/>
    <property type="match status" value="1"/>
</dbReference>
<dbReference type="Pfam" id="PF00579">
    <property type="entry name" value="tRNA-synt_1b"/>
    <property type="match status" value="1"/>
</dbReference>
<dbReference type="PRINTS" id="PR01040">
    <property type="entry name" value="TRNASYNTHTYR"/>
</dbReference>
<dbReference type="SMART" id="SM00363">
    <property type="entry name" value="S4"/>
    <property type="match status" value="1"/>
</dbReference>
<dbReference type="SUPFAM" id="SSF55174">
    <property type="entry name" value="Alpha-L RNA-binding motif"/>
    <property type="match status" value="1"/>
</dbReference>
<dbReference type="SUPFAM" id="SSF52374">
    <property type="entry name" value="Nucleotidylyl transferase"/>
    <property type="match status" value="1"/>
</dbReference>
<dbReference type="PROSITE" id="PS00178">
    <property type="entry name" value="AA_TRNA_LIGASE_I"/>
    <property type="match status" value="1"/>
</dbReference>
<dbReference type="PROSITE" id="PS50889">
    <property type="entry name" value="S4"/>
    <property type="match status" value="1"/>
</dbReference>
<reference key="1">
    <citation type="journal article" date="2011" name="J. Bacteriol.">
        <title>Genome sequence of lineage III Listeria monocytogenes strain HCC23.</title>
        <authorList>
            <person name="Steele C.L."/>
            <person name="Donaldson J.R."/>
            <person name="Paul D."/>
            <person name="Banes M.M."/>
            <person name="Arick T."/>
            <person name="Bridges S.M."/>
            <person name="Lawrence M.L."/>
        </authorList>
    </citation>
    <scope>NUCLEOTIDE SEQUENCE [LARGE SCALE GENOMIC DNA]</scope>
    <source>
        <strain>HCC23</strain>
    </source>
</reference>
<organism>
    <name type="scientific">Listeria monocytogenes serotype 4a (strain HCC23)</name>
    <dbReference type="NCBI Taxonomy" id="552536"/>
    <lineage>
        <taxon>Bacteria</taxon>
        <taxon>Bacillati</taxon>
        <taxon>Bacillota</taxon>
        <taxon>Bacilli</taxon>
        <taxon>Bacillales</taxon>
        <taxon>Listeriaceae</taxon>
        <taxon>Listeria</taxon>
    </lineage>
</organism>